<proteinExistence type="inferred from homology"/>
<dbReference type="EC" id="2.6.1.9" evidence="1"/>
<dbReference type="EMBL" id="AE017340">
    <property type="protein sequence ID" value="AAV82668.1"/>
    <property type="molecule type" value="Genomic_DNA"/>
</dbReference>
<dbReference type="SMR" id="Q5QWQ9"/>
<dbReference type="STRING" id="283942.IL1836"/>
<dbReference type="GeneID" id="41337020"/>
<dbReference type="KEGG" id="ilo:IL1836"/>
<dbReference type="eggNOG" id="COG0079">
    <property type="taxonomic scope" value="Bacteria"/>
</dbReference>
<dbReference type="HOGENOM" id="CLU_017584_3_1_6"/>
<dbReference type="OrthoDB" id="9813612at2"/>
<dbReference type="UniPathway" id="UPA00031">
    <property type="reaction ID" value="UER00012"/>
</dbReference>
<dbReference type="Proteomes" id="UP000001171">
    <property type="component" value="Chromosome"/>
</dbReference>
<dbReference type="GO" id="GO:0004400">
    <property type="term" value="F:histidinol-phosphate transaminase activity"/>
    <property type="evidence" value="ECO:0007669"/>
    <property type="project" value="UniProtKB-UniRule"/>
</dbReference>
<dbReference type="GO" id="GO:0030170">
    <property type="term" value="F:pyridoxal phosphate binding"/>
    <property type="evidence" value="ECO:0007669"/>
    <property type="project" value="InterPro"/>
</dbReference>
<dbReference type="GO" id="GO:0000105">
    <property type="term" value="P:L-histidine biosynthetic process"/>
    <property type="evidence" value="ECO:0007669"/>
    <property type="project" value="UniProtKB-UniRule"/>
</dbReference>
<dbReference type="CDD" id="cd00609">
    <property type="entry name" value="AAT_like"/>
    <property type="match status" value="1"/>
</dbReference>
<dbReference type="Gene3D" id="3.90.1150.10">
    <property type="entry name" value="Aspartate Aminotransferase, domain 1"/>
    <property type="match status" value="1"/>
</dbReference>
<dbReference type="Gene3D" id="3.40.640.10">
    <property type="entry name" value="Type I PLP-dependent aspartate aminotransferase-like (Major domain)"/>
    <property type="match status" value="1"/>
</dbReference>
<dbReference type="HAMAP" id="MF_01023">
    <property type="entry name" value="HisC_aminotrans_2"/>
    <property type="match status" value="1"/>
</dbReference>
<dbReference type="InterPro" id="IPR001917">
    <property type="entry name" value="Aminotrans_II_pyridoxalP_BS"/>
</dbReference>
<dbReference type="InterPro" id="IPR004839">
    <property type="entry name" value="Aminotransferase_I/II_large"/>
</dbReference>
<dbReference type="InterPro" id="IPR005861">
    <property type="entry name" value="HisP_aminotrans"/>
</dbReference>
<dbReference type="InterPro" id="IPR015424">
    <property type="entry name" value="PyrdxlP-dep_Trfase"/>
</dbReference>
<dbReference type="InterPro" id="IPR015421">
    <property type="entry name" value="PyrdxlP-dep_Trfase_major"/>
</dbReference>
<dbReference type="InterPro" id="IPR015422">
    <property type="entry name" value="PyrdxlP-dep_Trfase_small"/>
</dbReference>
<dbReference type="NCBIfam" id="TIGR01141">
    <property type="entry name" value="hisC"/>
    <property type="match status" value="1"/>
</dbReference>
<dbReference type="PANTHER" id="PTHR42885:SF2">
    <property type="entry name" value="HISTIDINOL-PHOSPHATE AMINOTRANSFERASE"/>
    <property type="match status" value="1"/>
</dbReference>
<dbReference type="PANTHER" id="PTHR42885">
    <property type="entry name" value="HISTIDINOL-PHOSPHATE AMINOTRANSFERASE-RELATED"/>
    <property type="match status" value="1"/>
</dbReference>
<dbReference type="Pfam" id="PF00155">
    <property type="entry name" value="Aminotran_1_2"/>
    <property type="match status" value="1"/>
</dbReference>
<dbReference type="SUPFAM" id="SSF53383">
    <property type="entry name" value="PLP-dependent transferases"/>
    <property type="match status" value="1"/>
</dbReference>
<dbReference type="PROSITE" id="PS00599">
    <property type="entry name" value="AA_TRANSFER_CLASS_2"/>
    <property type="match status" value="1"/>
</dbReference>
<reference key="1">
    <citation type="journal article" date="2004" name="Proc. Natl. Acad. Sci. U.S.A.">
        <title>Genome sequence of the deep-sea gamma-proteobacterium Idiomarina loihiensis reveals amino acid fermentation as a source of carbon and energy.</title>
        <authorList>
            <person name="Hou S."/>
            <person name="Saw J.H."/>
            <person name="Lee K.S."/>
            <person name="Freitas T.A."/>
            <person name="Belisle C."/>
            <person name="Kawarabayasi Y."/>
            <person name="Donachie S.P."/>
            <person name="Pikina A."/>
            <person name="Galperin M.Y."/>
            <person name="Koonin E.V."/>
            <person name="Makarova K.S."/>
            <person name="Omelchenko M.V."/>
            <person name="Sorokin A."/>
            <person name="Wolf Y.I."/>
            <person name="Li Q.X."/>
            <person name="Keum Y.S."/>
            <person name="Campbell S."/>
            <person name="Denery J."/>
            <person name="Aizawa S."/>
            <person name="Shibata S."/>
            <person name="Malahoff A."/>
            <person name="Alam M."/>
        </authorList>
    </citation>
    <scope>NUCLEOTIDE SEQUENCE [LARGE SCALE GENOMIC DNA]</scope>
    <source>
        <strain>ATCC BAA-735 / DSM 15497 / L2-TR</strain>
    </source>
</reference>
<name>HIS82_IDILO</name>
<keyword id="KW-0028">Amino-acid biosynthesis</keyword>
<keyword id="KW-0032">Aminotransferase</keyword>
<keyword id="KW-0368">Histidine biosynthesis</keyword>
<keyword id="KW-0663">Pyridoxal phosphate</keyword>
<keyword id="KW-1185">Reference proteome</keyword>
<keyword id="KW-0808">Transferase</keyword>
<feature type="chain" id="PRO_0000153374" description="Histidinol-phosphate aminotransferase 2">
    <location>
        <begin position="1"/>
        <end position="357"/>
    </location>
</feature>
<feature type="modified residue" description="N6-(pyridoxal phosphate)lysine" evidence="1">
    <location>
        <position position="216"/>
    </location>
</feature>
<organism>
    <name type="scientific">Idiomarina loihiensis (strain ATCC BAA-735 / DSM 15497 / L2-TR)</name>
    <dbReference type="NCBI Taxonomy" id="283942"/>
    <lineage>
        <taxon>Bacteria</taxon>
        <taxon>Pseudomonadati</taxon>
        <taxon>Pseudomonadota</taxon>
        <taxon>Gammaproteobacteria</taxon>
        <taxon>Alteromonadales</taxon>
        <taxon>Idiomarinaceae</taxon>
        <taxon>Idiomarina</taxon>
    </lineage>
</organism>
<comment type="catalytic activity">
    <reaction evidence="1">
        <text>L-histidinol phosphate + 2-oxoglutarate = 3-(imidazol-4-yl)-2-oxopropyl phosphate + L-glutamate</text>
        <dbReference type="Rhea" id="RHEA:23744"/>
        <dbReference type="ChEBI" id="CHEBI:16810"/>
        <dbReference type="ChEBI" id="CHEBI:29985"/>
        <dbReference type="ChEBI" id="CHEBI:57766"/>
        <dbReference type="ChEBI" id="CHEBI:57980"/>
        <dbReference type="EC" id="2.6.1.9"/>
    </reaction>
</comment>
<comment type="cofactor">
    <cofactor evidence="1">
        <name>pyridoxal 5'-phosphate</name>
        <dbReference type="ChEBI" id="CHEBI:597326"/>
    </cofactor>
</comment>
<comment type="pathway">
    <text evidence="1">Amino-acid biosynthesis; L-histidine biosynthesis; L-histidine from 5-phospho-alpha-D-ribose 1-diphosphate: step 7/9.</text>
</comment>
<comment type="subunit">
    <text evidence="1">Homodimer.</text>
</comment>
<comment type="similarity">
    <text evidence="1">Belongs to the class-II pyridoxal-phosphate-dependent aminotransferase family. Histidinol-phosphate aminotransferase subfamily.</text>
</comment>
<evidence type="ECO:0000255" key="1">
    <source>
        <dbReference type="HAMAP-Rule" id="MF_01023"/>
    </source>
</evidence>
<gene>
    <name evidence="1" type="primary">hisC2</name>
    <name type="ordered locus">IL1836</name>
</gene>
<accession>Q5QWQ9</accession>
<protein>
    <recommendedName>
        <fullName evidence="1">Histidinol-phosphate aminotransferase 2</fullName>
        <ecNumber evidence="1">2.6.1.9</ecNumber>
    </recommendedName>
    <alternativeName>
        <fullName evidence="1">Imidazole acetol-phosphate transaminase 2</fullName>
    </alternativeName>
</protein>
<sequence>MSIVEQLQRQHLKQLTPYASARRSMSGGNIWLNANESPYSNSYTVDDSKLNRYPEFQSKPLNQAYAEYAGINASKVLSSRGSDEGIELLIRAFCEPGQDKVLICPPTYGMYAISAKTFAVGVTEVPLLNSGEVNNWQLDTESIIEAAAECKVIFLCSPSNPLGNALNTDDIEQVLQHSPRSIVVVDEAYIEFSSGDSVVSWLERYPNLVVLRTLSKAFALAGIRCGFLLANDDIIELLQKVLAPYPLPDPTVQIAVQALQTSSLERLQQQVATLLAERDRVQTALEQTPLTLVSESDTNFLLYQCEDAAGLVKSLTDNDLLIRNQSAQRGLENVVRITIGSAAENDELIQQLKDYFS</sequence>